<feature type="transit peptide" description="Mitochondrion" evidence="1">
    <location>
        <begin position="1"/>
        <end position="16"/>
    </location>
</feature>
<feature type="chain" id="PRO_0000026796" description="Cytochrome b-c1 complex subunit 2, mitochondrial">
    <location>
        <begin position="17"/>
        <end position="376"/>
    </location>
</feature>
<reference key="1">
    <citation type="journal article" date="2004" name="Nature">
        <title>Genome evolution in yeasts.</title>
        <authorList>
            <person name="Dujon B."/>
            <person name="Sherman D."/>
            <person name="Fischer G."/>
            <person name="Durrens P."/>
            <person name="Casaregola S."/>
            <person name="Lafontaine I."/>
            <person name="de Montigny J."/>
            <person name="Marck C."/>
            <person name="Neuveglise C."/>
            <person name="Talla E."/>
            <person name="Goffard N."/>
            <person name="Frangeul L."/>
            <person name="Aigle M."/>
            <person name="Anthouard V."/>
            <person name="Babour A."/>
            <person name="Barbe V."/>
            <person name="Barnay S."/>
            <person name="Blanchin S."/>
            <person name="Beckerich J.-M."/>
            <person name="Beyne E."/>
            <person name="Bleykasten C."/>
            <person name="Boisrame A."/>
            <person name="Boyer J."/>
            <person name="Cattolico L."/>
            <person name="Confanioleri F."/>
            <person name="de Daruvar A."/>
            <person name="Despons L."/>
            <person name="Fabre E."/>
            <person name="Fairhead C."/>
            <person name="Ferry-Dumazet H."/>
            <person name="Groppi A."/>
            <person name="Hantraye F."/>
            <person name="Hennequin C."/>
            <person name="Jauniaux N."/>
            <person name="Joyet P."/>
            <person name="Kachouri R."/>
            <person name="Kerrest A."/>
            <person name="Koszul R."/>
            <person name="Lemaire M."/>
            <person name="Lesur I."/>
            <person name="Ma L."/>
            <person name="Muller H."/>
            <person name="Nicaud J.-M."/>
            <person name="Nikolski M."/>
            <person name="Oztas S."/>
            <person name="Ozier-Kalogeropoulos O."/>
            <person name="Pellenz S."/>
            <person name="Potier S."/>
            <person name="Richard G.-F."/>
            <person name="Straub M.-L."/>
            <person name="Suleau A."/>
            <person name="Swennen D."/>
            <person name="Tekaia F."/>
            <person name="Wesolowski-Louvel M."/>
            <person name="Westhof E."/>
            <person name="Wirth B."/>
            <person name="Zeniou-Meyer M."/>
            <person name="Zivanovic Y."/>
            <person name="Bolotin-Fukuhara M."/>
            <person name="Thierry A."/>
            <person name="Bouchier C."/>
            <person name="Caudron B."/>
            <person name="Scarpelli C."/>
            <person name="Gaillardin C."/>
            <person name="Weissenbach J."/>
            <person name="Wincker P."/>
            <person name="Souciet J.-L."/>
        </authorList>
    </citation>
    <scope>NUCLEOTIDE SEQUENCE [LARGE SCALE GENOMIC DNA]</scope>
    <source>
        <strain>ATCC 36239 / CBS 767 / BCRC 21394 / JCM 1990 / NBRC 0083 / IGC 2968</strain>
    </source>
</reference>
<protein>
    <recommendedName>
        <fullName>Cytochrome b-c1 complex subunit 2, mitochondrial</fullName>
    </recommendedName>
    <alternativeName>
        <fullName>Complex III subunit 2</fullName>
    </alternativeName>
    <alternativeName>
        <fullName>Core protein II</fullName>
    </alternativeName>
    <alternativeName>
        <fullName>Ubiquinol-cytochrome-c reductase complex core protein 2</fullName>
    </alternativeName>
</protein>
<sequence>MLSRVSARSYSSAAQSIKLTAREAPGNLSTLSVVVNNAGSKAGKSGVAHLLSKYNFLNNEAKSALRFTRESELLGGIVSSDVTRDSIVLKTQFLKQDLPYFVEALGNVLTKTSFRDHELPETVLPAAKAQNAEAQGSNAFKAFESLHEISFRKGLGNPLYYDGTSPISVDEIKQFASEAYNTSNVSVFGSGVNEGDLKKFIGESAFSALPAGSSKTTPVELHNGKESRIRAAGGSVALIGVPIKTADFAKYEVLSAAIGSTYLPGSSAPLSQIPGAISKVLKYQDAGLFVICVCNSDAAVVAQGVKAAKKAVDSVSASDLSSATKAAELAVALQSRFESPVDVKIDASAAKSPAKLSEFNYVAVGNVDLLPYANEL</sequence>
<dbReference type="EMBL" id="CR382137">
    <property type="protein sequence ID" value="CAG87970.1"/>
    <property type="molecule type" value="Genomic_DNA"/>
</dbReference>
<dbReference type="RefSeq" id="XP_459734.1">
    <property type="nucleotide sequence ID" value="XM_459734.1"/>
</dbReference>
<dbReference type="SMR" id="Q6BPY6"/>
<dbReference type="FunCoup" id="Q6BPY6">
    <property type="interactions" value="335"/>
</dbReference>
<dbReference type="STRING" id="284592.Q6BPY6"/>
<dbReference type="GeneID" id="2902784"/>
<dbReference type="KEGG" id="dha:DEHA2E09834g"/>
<dbReference type="VEuPathDB" id="FungiDB:DEHA2E09834g"/>
<dbReference type="eggNOG" id="KOG2583">
    <property type="taxonomic scope" value="Eukaryota"/>
</dbReference>
<dbReference type="HOGENOM" id="CLU_009902_0_1_1"/>
<dbReference type="InParanoid" id="Q6BPY6"/>
<dbReference type="OMA" id="YKYQDAG"/>
<dbReference type="OrthoDB" id="6369905at2759"/>
<dbReference type="Proteomes" id="UP000000599">
    <property type="component" value="Chromosome E"/>
</dbReference>
<dbReference type="GO" id="GO:0030061">
    <property type="term" value="C:mitochondrial crista"/>
    <property type="evidence" value="ECO:0007669"/>
    <property type="project" value="EnsemblFungi"/>
</dbReference>
<dbReference type="GO" id="GO:0045275">
    <property type="term" value="C:respiratory chain complex III"/>
    <property type="evidence" value="ECO:0007669"/>
    <property type="project" value="EnsemblFungi"/>
</dbReference>
<dbReference type="GO" id="GO:0046872">
    <property type="term" value="F:metal ion binding"/>
    <property type="evidence" value="ECO:0007669"/>
    <property type="project" value="InterPro"/>
</dbReference>
<dbReference type="GO" id="GO:0008121">
    <property type="term" value="F:ubiquinol-cytochrome-c reductase activity"/>
    <property type="evidence" value="ECO:0007669"/>
    <property type="project" value="EnsemblFungi"/>
</dbReference>
<dbReference type="GO" id="GO:0006122">
    <property type="term" value="P:mitochondrial electron transport, ubiquinol to cytochrome c"/>
    <property type="evidence" value="ECO:0007669"/>
    <property type="project" value="EnsemblFungi"/>
</dbReference>
<dbReference type="FunFam" id="3.30.830.10:FF:000021">
    <property type="entry name" value="Cytochrome b-c1 complex subunit 2"/>
    <property type="match status" value="1"/>
</dbReference>
<dbReference type="Gene3D" id="3.30.830.10">
    <property type="entry name" value="Metalloenzyme, LuxS/M16 peptidase-like"/>
    <property type="match status" value="2"/>
</dbReference>
<dbReference type="InterPro" id="IPR011249">
    <property type="entry name" value="Metalloenz_LuxS/M16"/>
</dbReference>
<dbReference type="InterPro" id="IPR050361">
    <property type="entry name" value="MPP/UQCRC_Complex"/>
</dbReference>
<dbReference type="InterPro" id="IPR011765">
    <property type="entry name" value="Pept_M16_N"/>
</dbReference>
<dbReference type="InterPro" id="IPR007863">
    <property type="entry name" value="Peptidase_M16_C"/>
</dbReference>
<dbReference type="PANTHER" id="PTHR11851:SF209">
    <property type="entry name" value="CYTOCHROME B-C1 COMPLEX SUBUNIT 2, MITOCHONDRIAL"/>
    <property type="match status" value="1"/>
</dbReference>
<dbReference type="PANTHER" id="PTHR11851">
    <property type="entry name" value="METALLOPROTEASE"/>
    <property type="match status" value="1"/>
</dbReference>
<dbReference type="Pfam" id="PF00675">
    <property type="entry name" value="Peptidase_M16"/>
    <property type="match status" value="1"/>
</dbReference>
<dbReference type="Pfam" id="PF05193">
    <property type="entry name" value="Peptidase_M16_C"/>
    <property type="match status" value="1"/>
</dbReference>
<dbReference type="SUPFAM" id="SSF63411">
    <property type="entry name" value="LuxS/MPP-like metallohydrolase"/>
    <property type="match status" value="2"/>
</dbReference>
<comment type="function">
    <text evidence="2">Component of the ubiquinol-cytochrome c oxidoreductase, a multisubunit transmembrane complex that is part of the mitochondrial electron transport chain which drives oxidative phosphorylation. The respiratory chain contains 3 multisubunit complexes succinate dehydrogenase (complex II, CII), ubiquinol-cytochrome c oxidoreductase (cytochrome b-c1 complex, complex III, CIII) and cytochrome c oxidase (complex IV, CIV), that cooperate to transfer electrons derived from NADH and succinate to molecular oxygen, creating an electrochemical gradient over the inner membrane that drives transmembrane transport and the ATP synthase. The cytochrome b-c1 complex catalyzes electron transfer from ubiquinol to cytochrome c, linking this redox reaction to translocation of protons across the mitochondrial inner membrane, with protons being carried across the membrane as hydrogens on the quinol. In the process called Q cycle, 2 protons are consumed from the matrix, 4 protons are released into the intermembrane space and 2 electrons are passed to cytochrome c.</text>
</comment>
<comment type="subunit">
    <text evidence="2">Component of the ubiquinol-cytochrome c oxidoreductase (cytochrome b-c1 complex, complex III, CIII), a multisubunit enzyme composed of 3 respiratory subunits cytochrome b, cytochrome c1 and Rieske protein, 2 core protein subunits, and additional low-molecular weight protein subunits. The complex exists as an obligatory dimer and forms supercomplexes (SCs) in the inner mitochondrial membrane with cytochrome c oxidase (complex IV, CIV).</text>
</comment>
<comment type="subcellular location">
    <subcellularLocation>
        <location evidence="2">Mitochondrion inner membrane</location>
        <topology evidence="2">Peripheral membrane protein</topology>
        <orientation evidence="2">Matrix side</orientation>
    </subcellularLocation>
</comment>
<comment type="similarity">
    <text evidence="3">Belongs to the peptidase M16 family. UQCRC2/QCR2 subfamily.</text>
</comment>
<comment type="caution">
    <text evidence="3">Does not seem to have protease activity as it lacks the zinc-binding site.</text>
</comment>
<keyword id="KW-0249">Electron transport</keyword>
<keyword id="KW-0472">Membrane</keyword>
<keyword id="KW-0496">Mitochondrion</keyword>
<keyword id="KW-0999">Mitochondrion inner membrane</keyword>
<keyword id="KW-1185">Reference proteome</keyword>
<keyword id="KW-0679">Respiratory chain</keyword>
<keyword id="KW-0809">Transit peptide</keyword>
<keyword id="KW-0813">Transport</keyword>
<name>QCR2_DEBHA</name>
<proteinExistence type="inferred from homology"/>
<accession>Q6BPY6</accession>
<organism>
    <name type="scientific">Debaryomyces hansenii (strain ATCC 36239 / CBS 767 / BCRC 21394 / JCM 1990 / NBRC 0083 / IGC 2968)</name>
    <name type="common">Yeast</name>
    <name type="synonym">Torulaspora hansenii</name>
    <dbReference type="NCBI Taxonomy" id="284592"/>
    <lineage>
        <taxon>Eukaryota</taxon>
        <taxon>Fungi</taxon>
        <taxon>Dikarya</taxon>
        <taxon>Ascomycota</taxon>
        <taxon>Saccharomycotina</taxon>
        <taxon>Pichiomycetes</taxon>
        <taxon>Debaryomycetaceae</taxon>
        <taxon>Debaryomyces</taxon>
    </lineage>
</organism>
<gene>
    <name type="primary">QCR2</name>
    <name type="ordered locus">DEHA2E09834g</name>
</gene>
<evidence type="ECO:0000250" key="1"/>
<evidence type="ECO:0000250" key="2">
    <source>
        <dbReference type="UniProtKB" id="P07257"/>
    </source>
</evidence>
<evidence type="ECO:0000305" key="3"/>